<keyword id="KW-0058">Aromatic hydrocarbons catabolism</keyword>
<keyword id="KW-0456">Lyase</keyword>
<keyword id="KW-0464">Manganese</keyword>
<keyword id="KW-0479">Metal-binding</keyword>
<comment type="catalytic activity">
    <reaction evidence="1">
        <text>(S)-4-hydroxy-2-oxopentanoate = acetaldehyde + pyruvate</text>
        <dbReference type="Rhea" id="RHEA:22624"/>
        <dbReference type="ChEBI" id="CHEBI:15343"/>
        <dbReference type="ChEBI" id="CHEBI:15361"/>
        <dbReference type="ChEBI" id="CHEBI:73143"/>
        <dbReference type="EC" id="4.1.3.39"/>
    </reaction>
</comment>
<comment type="similarity">
    <text evidence="1">Belongs to the 4-hydroxy-2-oxovalerate aldolase family.</text>
</comment>
<sequence>MNAPRLTDTTLRDGSHALAHTFTRQQVRDIVRALDRAGVPVIEVTHGDGLAGSSLQYGFSRVPDLDLIAEARETAERARIAALLLPGIGTRRELRAAVERGVQVLRIATQCTEADISEEHFKMAKDMGLETVGFLMMSHMRPPEFLAEQARLMESYGADCVYVVDSAGAMLPHDAAARVQALKAALTVQVGFHAHNNLGLGIGNTLAALEAGADQIDGCLRGLGAGAGNAATEVLAAVLDRLGINPGLDVLALMDAAEYVVAPIMPFQPFPDRDAITIGYAGVYSTFLLHARRIGEQLGVDPRAILIELGRRQTVAGQEDWILDVALELVRQQQTTPV</sequence>
<feature type="chain" id="PRO_0000387910" description="4-hydroxy-2-oxovalerate aldolase">
    <location>
        <begin position="1"/>
        <end position="338"/>
    </location>
</feature>
<feature type="domain" description="Pyruvate carboxyltransferase" evidence="1">
    <location>
        <begin position="4"/>
        <end position="254"/>
    </location>
</feature>
<feature type="active site" description="Proton acceptor" evidence="1">
    <location>
        <position position="16"/>
    </location>
</feature>
<feature type="binding site" evidence="1">
    <location>
        <begin position="12"/>
        <end position="13"/>
    </location>
    <ligand>
        <name>substrate</name>
    </ligand>
</feature>
<feature type="binding site" evidence="1">
    <location>
        <position position="13"/>
    </location>
    <ligand>
        <name>Mn(2+)</name>
        <dbReference type="ChEBI" id="CHEBI:29035"/>
    </ligand>
</feature>
<feature type="binding site" evidence="1">
    <location>
        <position position="166"/>
    </location>
    <ligand>
        <name>substrate</name>
    </ligand>
</feature>
<feature type="binding site" evidence="1">
    <location>
        <position position="193"/>
    </location>
    <ligand>
        <name>Mn(2+)</name>
        <dbReference type="ChEBI" id="CHEBI:29035"/>
    </ligand>
</feature>
<feature type="binding site" evidence="1">
    <location>
        <position position="193"/>
    </location>
    <ligand>
        <name>substrate</name>
    </ligand>
</feature>
<feature type="binding site" evidence="1">
    <location>
        <position position="195"/>
    </location>
    <ligand>
        <name>Mn(2+)</name>
        <dbReference type="ChEBI" id="CHEBI:29035"/>
    </ligand>
</feature>
<feature type="binding site" evidence="1">
    <location>
        <position position="284"/>
    </location>
    <ligand>
        <name>substrate</name>
    </ligand>
</feature>
<feature type="site" description="Transition state stabilizer" evidence="1">
    <location>
        <position position="12"/>
    </location>
</feature>
<evidence type="ECO:0000255" key="1">
    <source>
        <dbReference type="HAMAP-Rule" id="MF_01656"/>
    </source>
</evidence>
<accession>A5UWE6</accession>
<dbReference type="EC" id="4.1.3.39" evidence="1"/>
<dbReference type="EMBL" id="CP000686">
    <property type="protein sequence ID" value="ABQ90949.1"/>
    <property type="molecule type" value="Genomic_DNA"/>
</dbReference>
<dbReference type="RefSeq" id="WP_011957293.1">
    <property type="nucleotide sequence ID" value="NC_009523.1"/>
</dbReference>
<dbReference type="SMR" id="A5UWE6"/>
<dbReference type="STRING" id="357808.RoseRS_2573"/>
<dbReference type="KEGG" id="rrs:RoseRS_2573"/>
<dbReference type="eggNOG" id="COG0119">
    <property type="taxonomic scope" value="Bacteria"/>
</dbReference>
<dbReference type="HOGENOM" id="CLU_049173_0_0_0"/>
<dbReference type="OrthoDB" id="9804858at2"/>
<dbReference type="Proteomes" id="UP000006554">
    <property type="component" value="Chromosome"/>
</dbReference>
<dbReference type="GO" id="GO:0003852">
    <property type="term" value="F:2-isopropylmalate synthase activity"/>
    <property type="evidence" value="ECO:0007669"/>
    <property type="project" value="TreeGrafter"/>
</dbReference>
<dbReference type="GO" id="GO:0008701">
    <property type="term" value="F:4-hydroxy-2-oxovalerate aldolase activity"/>
    <property type="evidence" value="ECO:0007669"/>
    <property type="project" value="UniProtKB-UniRule"/>
</dbReference>
<dbReference type="GO" id="GO:0030145">
    <property type="term" value="F:manganese ion binding"/>
    <property type="evidence" value="ECO:0007669"/>
    <property type="project" value="UniProtKB-UniRule"/>
</dbReference>
<dbReference type="GO" id="GO:0009056">
    <property type="term" value="P:catabolic process"/>
    <property type="evidence" value="ECO:0007669"/>
    <property type="project" value="UniProtKB-KW"/>
</dbReference>
<dbReference type="GO" id="GO:0009098">
    <property type="term" value="P:L-leucine biosynthetic process"/>
    <property type="evidence" value="ECO:0007669"/>
    <property type="project" value="TreeGrafter"/>
</dbReference>
<dbReference type="CDD" id="cd07943">
    <property type="entry name" value="DRE_TIM_HOA"/>
    <property type="match status" value="1"/>
</dbReference>
<dbReference type="Gene3D" id="1.10.8.60">
    <property type="match status" value="1"/>
</dbReference>
<dbReference type="Gene3D" id="3.20.20.70">
    <property type="entry name" value="Aldolase class I"/>
    <property type="match status" value="1"/>
</dbReference>
<dbReference type="HAMAP" id="MF_01656">
    <property type="entry name" value="HOA"/>
    <property type="match status" value="1"/>
</dbReference>
<dbReference type="InterPro" id="IPR050073">
    <property type="entry name" value="2-IPM_HCS-like"/>
</dbReference>
<dbReference type="InterPro" id="IPR017629">
    <property type="entry name" value="4OH_2_O-val_aldolase"/>
</dbReference>
<dbReference type="InterPro" id="IPR013785">
    <property type="entry name" value="Aldolase_TIM"/>
</dbReference>
<dbReference type="InterPro" id="IPR012425">
    <property type="entry name" value="DmpG_comm"/>
</dbReference>
<dbReference type="InterPro" id="IPR035685">
    <property type="entry name" value="DRE_TIM_HOA"/>
</dbReference>
<dbReference type="InterPro" id="IPR000891">
    <property type="entry name" value="PYR_CT"/>
</dbReference>
<dbReference type="NCBIfam" id="TIGR03217">
    <property type="entry name" value="4OH_2_O_val_ald"/>
    <property type="match status" value="1"/>
</dbReference>
<dbReference type="NCBIfam" id="NF006049">
    <property type="entry name" value="PRK08195.1"/>
    <property type="match status" value="1"/>
</dbReference>
<dbReference type="PANTHER" id="PTHR10277:SF9">
    <property type="entry name" value="2-ISOPROPYLMALATE SYNTHASE 1, CHLOROPLASTIC-RELATED"/>
    <property type="match status" value="1"/>
</dbReference>
<dbReference type="PANTHER" id="PTHR10277">
    <property type="entry name" value="HOMOCITRATE SYNTHASE-RELATED"/>
    <property type="match status" value="1"/>
</dbReference>
<dbReference type="Pfam" id="PF07836">
    <property type="entry name" value="DmpG_comm"/>
    <property type="match status" value="1"/>
</dbReference>
<dbReference type="Pfam" id="PF00682">
    <property type="entry name" value="HMGL-like"/>
    <property type="match status" value="1"/>
</dbReference>
<dbReference type="SUPFAM" id="SSF51569">
    <property type="entry name" value="Aldolase"/>
    <property type="match status" value="1"/>
</dbReference>
<dbReference type="SUPFAM" id="SSF89000">
    <property type="entry name" value="post-HMGL domain-like"/>
    <property type="match status" value="1"/>
</dbReference>
<dbReference type="PROSITE" id="PS50991">
    <property type="entry name" value="PYR_CT"/>
    <property type="match status" value="1"/>
</dbReference>
<gene>
    <name type="ordered locus">RoseRS_2573</name>
</gene>
<organism>
    <name type="scientific">Roseiflexus sp. (strain RS-1)</name>
    <dbReference type="NCBI Taxonomy" id="357808"/>
    <lineage>
        <taxon>Bacteria</taxon>
        <taxon>Bacillati</taxon>
        <taxon>Chloroflexota</taxon>
        <taxon>Chloroflexia</taxon>
        <taxon>Chloroflexales</taxon>
        <taxon>Roseiflexineae</taxon>
        <taxon>Roseiflexaceae</taxon>
        <taxon>Roseiflexus</taxon>
    </lineage>
</organism>
<reference key="1">
    <citation type="submission" date="2007-04" db="EMBL/GenBank/DDBJ databases">
        <title>Complete sequence of Roseiflexus sp. RS-1.</title>
        <authorList>
            <consortium name="US DOE Joint Genome Institute"/>
            <person name="Copeland A."/>
            <person name="Lucas S."/>
            <person name="Lapidus A."/>
            <person name="Barry K."/>
            <person name="Detter J.C."/>
            <person name="Glavina del Rio T."/>
            <person name="Hammon N."/>
            <person name="Israni S."/>
            <person name="Dalin E."/>
            <person name="Tice H."/>
            <person name="Pitluck S."/>
            <person name="Chertkov O."/>
            <person name="Brettin T."/>
            <person name="Bruce D."/>
            <person name="Han C."/>
            <person name="Schmutz J."/>
            <person name="Larimer F."/>
            <person name="Land M."/>
            <person name="Hauser L."/>
            <person name="Kyrpides N."/>
            <person name="Mikhailova N."/>
            <person name="Bryant D.A."/>
            <person name="Richardson P."/>
        </authorList>
    </citation>
    <scope>NUCLEOTIDE SEQUENCE [LARGE SCALE GENOMIC DNA]</scope>
    <source>
        <strain>RS-1</strain>
    </source>
</reference>
<name>HOA_ROSS1</name>
<proteinExistence type="inferred from homology"/>
<protein>
    <recommendedName>
        <fullName evidence="1">4-hydroxy-2-oxovalerate aldolase</fullName>
        <shortName evidence="1">HOA</shortName>
        <ecNumber evidence="1">4.1.3.39</ecNumber>
    </recommendedName>
    <alternativeName>
        <fullName evidence="1">4-hydroxy-2-keto-pentanoic acid aldolase</fullName>
    </alternativeName>
    <alternativeName>
        <fullName evidence="1">4-hydroxy-2-oxopentanoate aldolase</fullName>
    </alternativeName>
</protein>